<accession>A7MJ80</accession>
<gene>
    <name evidence="1" type="primary">thiE</name>
    <name type="ordered locus">ESA_03680</name>
</gene>
<comment type="function">
    <text evidence="1">Condenses 4-methyl-5-(beta-hydroxyethyl)thiazole monophosphate (THZ-P) and 2-methyl-4-amino-5-hydroxymethyl pyrimidine pyrophosphate (HMP-PP) to form thiamine monophosphate (TMP).</text>
</comment>
<comment type="catalytic activity">
    <reaction evidence="1">
        <text>2-[(2R,5Z)-2-carboxy-4-methylthiazol-5(2H)-ylidene]ethyl phosphate + 4-amino-2-methyl-5-(diphosphooxymethyl)pyrimidine + 2 H(+) = thiamine phosphate + CO2 + diphosphate</text>
        <dbReference type="Rhea" id="RHEA:47844"/>
        <dbReference type="ChEBI" id="CHEBI:15378"/>
        <dbReference type="ChEBI" id="CHEBI:16526"/>
        <dbReference type="ChEBI" id="CHEBI:33019"/>
        <dbReference type="ChEBI" id="CHEBI:37575"/>
        <dbReference type="ChEBI" id="CHEBI:57841"/>
        <dbReference type="ChEBI" id="CHEBI:62899"/>
        <dbReference type="EC" id="2.5.1.3"/>
    </reaction>
</comment>
<comment type="catalytic activity">
    <reaction evidence="1">
        <text>2-(2-carboxy-4-methylthiazol-5-yl)ethyl phosphate + 4-amino-2-methyl-5-(diphosphooxymethyl)pyrimidine + 2 H(+) = thiamine phosphate + CO2 + diphosphate</text>
        <dbReference type="Rhea" id="RHEA:47848"/>
        <dbReference type="ChEBI" id="CHEBI:15378"/>
        <dbReference type="ChEBI" id="CHEBI:16526"/>
        <dbReference type="ChEBI" id="CHEBI:33019"/>
        <dbReference type="ChEBI" id="CHEBI:37575"/>
        <dbReference type="ChEBI" id="CHEBI:57841"/>
        <dbReference type="ChEBI" id="CHEBI:62890"/>
        <dbReference type="EC" id="2.5.1.3"/>
    </reaction>
</comment>
<comment type="catalytic activity">
    <reaction evidence="1">
        <text>4-methyl-5-(2-phosphooxyethyl)-thiazole + 4-amino-2-methyl-5-(diphosphooxymethyl)pyrimidine + H(+) = thiamine phosphate + diphosphate</text>
        <dbReference type="Rhea" id="RHEA:22328"/>
        <dbReference type="ChEBI" id="CHEBI:15378"/>
        <dbReference type="ChEBI" id="CHEBI:33019"/>
        <dbReference type="ChEBI" id="CHEBI:37575"/>
        <dbReference type="ChEBI" id="CHEBI:57841"/>
        <dbReference type="ChEBI" id="CHEBI:58296"/>
        <dbReference type="EC" id="2.5.1.3"/>
    </reaction>
</comment>
<comment type="cofactor">
    <cofactor evidence="1">
        <name>Mg(2+)</name>
        <dbReference type="ChEBI" id="CHEBI:18420"/>
    </cofactor>
    <text evidence="1">Binds 1 Mg(2+) ion per subunit.</text>
</comment>
<comment type="pathway">
    <text evidence="1">Cofactor biosynthesis; thiamine diphosphate biosynthesis; thiamine phosphate from 4-amino-2-methyl-5-diphosphomethylpyrimidine and 4-methyl-5-(2-phosphoethyl)-thiazole: step 1/1.</text>
</comment>
<comment type="similarity">
    <text evidence="1">Belongs to the thiamine-phosphate synthase family.</text>
</comment>
<sequence length="210" mass="22754">MTPLFAPVPHRLGLYPVVDSVEWVTRLLDAGVRTLQLRIKDKTDAEVETDIAAAIALGQRYHARLFINDYWRLAIKHQAYGVHLGQEDLETADPDAIRRAGLRLGVSTHDDMEIDVALAVRPSYIALGHVFPTQTKQMPSAPQGLAQLAAHVKRLGDYPTVAIGGISLERAPAVLETGVGSIAVVSAITQAPDWRGATQRLLELAGVGDE</sequence>
<proteinExistence type="inferred from homology"/>
<reference key="1">
    <citation type="journal article" date="2010" name="PLoS ONE">
        <title>Genome sequence of Cronobacter sakazakii BAA-894 and comparative genomic hybridization analysis with other Cronobacter species.</title>
        <authorList>
            <person name="Kucerova E."/>
            <person name="Clifton S.W."/>
            <person name="Xia X.Q."/>
            <person name="Long F."/>
            <person name="Porwollik S."/>
            <person name="Fulton L."/>
            <person name="Fronick C."/>
            <person name="Minx P."/>
            <person name="Kyung K."/>
            <person name="Warren W."/>
            <person name="Fulton R."/>
            <person name="Feng D."/>
            <person name="Wollam A."/>
            <person name="Shah N."/>
            <person name="Bhonagiri V."/>
            <person name="Nash W.E."/>
            <person name="Hallsworth-Pepin K."/>
            <person name="Wilson R.K."/>
            <person name="McClelland M."/>
            <person name="Forsythe S.J."/>
        </authorList>
    </citation>
    <scope>NUCLEOTIDE SEQUENCE [LARGE SCALE GENOMIC DNA]</scope>
    <source>
        <strain>ATCC BAA-894</strain>
    </source>
</reference>
<protein>
    <recommendedName>
        <fullName evidence="1">Thiamine-phosphate synthase</fullName>
        <shortName evidence="1">TP synthase</shortName>
        <shortName evidence="1">TPS</shortName>
        <ecNumber evidence="1">2.5.1.3</ecNumber>
    </recommendedName>
    <alternativeName>
        <fullName evidence="1">Thiamine-phosphate pyrophosphorylase</fullName>
        <shortName evidence="1">TMP pyrophosphorylase</shortName>
        <shortName evidence="1">TMP-PPase</shortName>
    </alternativeName>
</protein>
<feature type="chain" id="PRO_0000336391" description="Thiamine-phosphate synthase">
    <location>
        <begin position="1"/>
        <end position="210"/>
    </location>
</feature>
<feature type="binding site" evidence="1">
    <location>
        <begin position="36"/>
        <end position="40"/>
    </location>
    <ligand>
        <name>4-amino-2-methyl-5-(diphosphooxymethyl)pyrimidine</name>
        <dbReference type="ChEBI" id="CHEBI:57841"/>
    </ligand>
</feature>
<feature type="binding site" evidence="1">
    <location>
        <position position="68"/>
    </location>
    <ligand>
        <name>4-amino-2-methyl-5-(diphosphooxymethyl)pyrimidine</name>
        <dbReference type="ChEBI" id="CHEBI:57841"/>
    </ligand>
</feature>
<feature type="binding site" evidence="1">
    <location>
        <position position="69"/>
    </location>
    <ligand>
        <name>Mg(2+)</name>
        <dbReference type="ChEBI" id="CHEBI:18420"/>
    </ligand>
</feature>
<feature type="binding site" evidence="1">
    <location>
        <position position="88"/>
    </location>
    <ligand>
        <name>Mg(2+)</name>
        <dbReference type="ChEBI" id="CHEBI:18420"/>
    </ligand>
</feature>
<feature type="binding site" evidence="1">
    <location>
        <position position="107"/>
    </location>
    <ligand>
        <name>4-amino-2-methyl-5-(diphosphooxymethyl)pyrimidine</name>
        <dbReference type="ChEBI" id="CHEBI:57841"/>
    </ligand>
</feature>
<feature type="binding site" evidence="1">
    <location>
        <begin position="133"/>
        <end position="135"/>
    </location>
    <ligand>
        <name>2-[(2R,5Z)-2-carboxy-4-methylthiazol-5(2H)-ylidene]ethyl phosphate</name>
        <dbReference type="ChEBI" id="CHEBI:62899"/>
    </ligand>
</feature>
<feature type="binding site" evidence="1">
    <location>
        <position position="136"/>
    </location>
    <ligand>
        <name>4-amino-2-methyl-5-(diphosphooxymethyl)pyrimidine</name>
        <dbReference type="ChEBI" id="CHEBI:57841"/>
    </ligand>
</feature>
<feature type="binding site" evidence="1">
    <location>
        <position position="165"/>
    </location>
    <ligand>
        <name>2-[(2R,5Z)-2-carboxy-4-methylthiazol-5(2H)-ylidene]ethyl phosphate</name>
        <dbReference type="ChEBI" id="CHEBI:62899"/>
    </ligand>
</feature>
<feature type="binding site" evidence="1">
    <location>
        <begin position="185"/>
        <end position="186"/>
    </location>
    <ligand>
        <name>2-[(2R,5Z)-2-carboxy-4-methylthiazol-5(2H)-ylidene]ethyl phosphate</name>
        <dbReference type="ChEBI" id="CHEBI:62899"/>
    </ligand>
</feature>
<organism>
    <name type="scientific">Cronobacter sakazakii (strain ATCC BAA-894)</name>
    <name type="common">Enterobacter sakazakii</name>
    <dbReference type="NCBI Taxonomy" id="290339"/>
    <lineage>
        <taxon>Bacteria</taxon>
        <taxon>Pseudomonadati</taxon>
        <taxon>Pseudomonadota</taxon>
        <taxon>Gammaproteobacteria</taxon>
        <taxon>Enterobacterales</taxon>
        <taxon>Enterobacteriaceae</taxon>
        <taxon>Cronobacter</taxon>
    </lineage>
</organism>
<dbReference type="EC" id="2.5.1.3" evidence="1"/>
<dbReference type="EMBL" id="CP000783">
    <property type="protein sequence ID" value="ABU78884.1"/>
    <property type="molecule type" value="Genomic_DNA"/>
</dbReference>
<dbReference type="SMR" id="A7MJ80"/>
<dbReference type="KEGG" id="esa:ESA_03680"/>
<dbReference type="PATRIC" id="fig|290339.8.peg.3277"/>
<dbReference type="HOGENOM" id="CLU_018272_3_3_6"/>
<dbReference type="UniPathway" id="UPA00060">
    <property type="reaction ID" value="UER00141"/>
</dbReference>
<dbReference type="Proteomes" id="UP000000260">
    <property type="component" value="Chromosome"/>
</dbReference>
<dbReference type="GO" id="GO:0005737">
    <property type="term" value="C:cytoplasm"/>
    <property type="evidence" value="ECO:0007669"/>
    <property type="project" value="TreeGrafter"/>
</dbReference>
<dbReference type="GO" id="GO:0000287">
    <property type="term" value="F:magnesium ion binding"/>
    <property type="evidence" value="ECO:0007669"/>
    <property type="project" value="UniProtKB-UniRule"/>
</dbReference>
<dbReference type="GO" id="GO:0004789">
    <property type="term" value="F:thiamine-phosphate diphosphorylase activity"/>
    <property type="evidence" value="ECO:0007669"/>
    <property type="project" value="UniProtKB-UniRule"/>
</dbReference>
<dbReference type="GO" id="GO:0009228">
    <property type="term" value="P:thiamine biosynthetic process"/>
    <property type="evidence" value="ECO:0007669"/>
    <property type="project" value="UniProtKB-KW"/>
</dbReference>
<dbReference type="GO" id="GO:0009229">
    <property type="term" value="P:thiamine diphosphate biosynthetic process"/>
    <property type="evidence" value="ECO:0007669"/>
    <property type="project" value="UniProtKB-UniRule"/>
</dbReference>
<dbReference type="CDD" id="cd00564">
    <property type="entry name" value="TMP_TenI"/>
    <property type="match status" value="1"/>
</dbReference>
<dbReference type="FunFam" id="3.20.20.70:FF:000064">
    <property type="entry name" value="Thiamine-phosphate synthase"/>
    <property type="match status" value="1"/>
</dbReference>
<dbReference type="Gene3D" id="3.20.20.70">
    <property type="entry name" value="Aldolase class I"/>
    <property type="match status" value="1"/>
</dbReference>
<dbReference type="HAMAP" id="MF_00097">
    <property type="entry name" value="TMP_synthase"/>
    <property type="match status" value="1"/>
</dbReference>
<dbReference type="InterPro" id="IPR013785">
    <property type="entry name" value="Aldolase_TIM"/>
</dbReference>
<dbReference type="InterPro" id="IPR036206">
    <property type="entry name" value="ThiamineP_synth_sf"/>
</dbReference>
<dbReference type="InterPro" id="IPR022998">
    <property type="entry name" value="ThiamineP_synth_TenI"/>
</dbReference>
<dbReference type="InterPro" id="IPR034291">
    <property type="entry name" value="TMP_synthase"/>
</dbReference>
<dbReference type="NCBIfam" id="NF002904">
    <property type="entry name" value="PRK03512.1"/>
    <property type="match status" value="1"/>
</dbReference>
<dbReference type="NCBIfam" id="TIGR00693">
    <property type="entry name" value="thiE"/>
    <property type="match status" value="1"/>
</dbReference>
<dbReference type="PANTHER" id="PTHR20857">
    <property type="entry name" value="THIAMINE-PHOSPHATE PYROPHOSPHORYLASE"/>
    <property type="match status" value="1"/>
</dbReference>
<dbReference type="PANTHER" id="PTHR20857:SF15">
    <property type="entry name" value="THIAMINE-PHOSPHATE SYNTHASE"/>
    <property type="match status" value="1"/>
</dbReference>
<dbReference type="Pfam" id="PF02581">
    <property type="entry name" value="TMP-TENI"/>
    <property type="match status" value="1"/>
</dbReference>
<dbReference type="SUPFAM" id="SSF51391">
    <property type="entry name" value="Thiamin phosphate synthase"/>
    <property type="match status" value="1"/>
</dbReference>
<keyword id="KW-0460">Magnesium</keyword>
<keyword id="KW-0479">Metal-binding</keyword>
<keyword id="KW-1185">Reference proteome</keyword>
<keyword id="KW-0784">Thiamine biosynthesis</keyword>
<keyword id="KW-0808">Transferase</keyword>
<name>THIE_CROS8</name>
<evidence type="ECO:0000255" key="1">
    <source>
        <dbReference type="HAMAP-Rule" id="MF_00097"/>
    </source>
</evidence>